<sequence length="1040" mass="111855">MQVLPPGSTGGPSRLFILRPVATTLLMAAILLAGIIGYRFLPVAALPEVDYPTIQVVTLYPGASPDVMTSSVTAPLERQFGQMSGLKQMSSQSSGGASVVTLQFQLTLPLDVAEQEVQAAINAATNLLPSDLPNPPIYSKVNPADPPIMTLAVTSNAMPMTQVEDMVETRVAQKISQVSGVGLVTLAGGQRPAVRVKLNAQAIAALGLTSETVRTAITGANVNSAKGSLDGPERAVTLSANDQMQSADEYRKLIIAYQNGAPVRLGDVATVEQGAENSWLGAWANQAPAIVMNVQRQPGANIIATADSIRQMLPQLTESLPKSVKVTVLSDRTTNIRASVRDTQFELMLAIALVVMIIYLFLRNIPATIIPGVAVPLSLIGTFAVMVFLDFSINNLTLMALTIATGFVVDDAIVVIENISRYIEKGEKPLAAALKGAGEIGFTIISLTFSLIAVLIPLLFMGDIVGRLFREFAVTLAVAILISAVVSLTLTPMMCARMLSRQSLRKQNRFSRACERMFDRVIASYGRGLAKVLNHPWLTLSVAFATLLLSVMLWITIPKGFFPVQDNGIIQGTLQAPQSSSYASMAQRQRQVAERILQDPAVQSLTTFVGVDGANPTLNSARLQINLKPLDARDDRVQQVISRLQTAVATIPGVALYLQPTQDLTIDTQVSRTQYQFTLQATTLDALSHWVPKLQNALQSLPQLSEVSSDWQDRGLAAWVNVDRDSASRLGISMADVDNALYNAFGQRLISTIYTQANQYRVVLEHNTASTPGLAALETIRLTSRDGGTVPLSAIARIEQRFAPLSINHLDQFPVTTFSFNVPEGYSLGDAVQAILDTEKTLALPADITTQFQGSTLAFQAALGSTVWLIVAAVVAMYIVLGVLYESFIHPITILSTLPTAGVGALLALIIAGSELDIIAIIGIILLIGIVKKNAIMMIDFALAAEREQGMSPRDAIFQACLLRFRPILMTTLAALLGALPLMLSTGVGAELRRPLGIAMVGGLLVSQVLTLFTTPVIYLLFDRLSLYVKSRFPRHKEEA</sequence>
<evidence type="ECO:0000255" key="1">
    <source>
        <dbReference type="HAMAP-Rule" id="MF_01423"/>
    </source>
</evidence>
<feature type="chain" id="PRO_0000161826" description="Multidrug resistance protein MdtB">
    <location>
        <begin position="1"/>
        <end position="1040"/>
    </location>
</feature>
<feature type="transmembrane region" description="Helical" evidence="1">
    <location>
        <begin position="15"/>
        <end position="37"/>
    </location>
</feature>
<feature type="transmembrane region" description="Helical" evidence="1">
    <location>
        <begin position="345"/>
        <end position="362"/>
    </location>
</feature>
<feature type="transmembrane region" description="Helical" evidence="1">
    <location>
        <begin position="367"/>
        <end position="389"/>
    </location>
</feature>
<feature type="transmembrane region" description="Helical" evidence="1">
    <location>
        <begin position="396"/>
        <end position="418"/>
    </location>
</feature>
<feature type="transmembrane region" description="Helical" evidence="1">
    <location>
        <begin position="438"/>
        <end position="460"/>
    </location>
</feature>
<feature type="transmembrane region" description="Helical" evidence="1">
    <location>
        <begin position="472"/>
        <end position="494"/>
    </location>
</feature>
<feature type="transmembrane region" description="Helical" evidence="1">
    <location>
        <begin position="535"/>
        <end position="557"/>
    </location>
</feature>
<feature type="transmembrane region" description="Helical" evidence="1">
    <location>
        <begin position="867"/>
        <end position="889"/>
    </location>
</feature>
<feature type="transmembrane region" description="Helical" evidence="1">
    <location>
        <begin position="909"/>
        <end position="931"/>
    </location>
</feature>
<feature type="transmembrane region" description="Helical" evidence="1">
    <location>
        <begin position="968"/>
        <end position="990"/>
    </location>
</feature>
<feature type="transmembrane region" description="Helical" evidence="1">
    <location>
        <begin position="1000"/>
        <end position="1022"/>
    </location>
</feature>
<proteinExistence type="inferred from homology"/>
<gene>
    <name evidence="1" type="primary">mdtB</name>
    <name type="ordered locus">STY2340</name>
    <name type="ordered locus">t0745</name>
</gene>
<organism>
    <name type="scientific">Salmonella typhi</name>
    <dbReference type="NCBI Taxonomy" id="90370"/>
    <lineage>
        <taxon>Bacteria</taxon>
        <taxon>Pseudomonadati</taxon>
        <taxon>Pseudomonadota</taxon>
        <taxon>Gammaproteobacteria</taxon>
        <taxon>Enterobacterales</taxon>
        <taxon>Enterobacteriaceae</taxon>
        <taxon>Salmonella</taxon>
    </lineage>
</organism>
<comment type="subunit">
    <text evidence="1">Part of a tripartite efflux system composed of MdtA, MdtB and MdtC. MdtB forms a heteromultimer with MdtC.</text>
</comment>
<comment type="subcellular location">
    <subcellularLocation>
        <location evidence="1">Cell inner membrane</location>
        <topology evidence="1">Multi-pass membrane protein</topology>
    </subcellularLocation>
</comment>
<comment type="similarity">
    <text evidence="1">Belongs to the resistance-nodulation-cell division (RND) (TC 2.A.6) family. MdtB subfamily.</text>
</comment>
<keyword id="KW-0997">Cell inner membrane</keyword>
<keyword id="KW-1003">Cell membrane</keyword>
<keyword id="KW-0472">Membrane</keyword>
<keyword id="KW-0812">Transmembrane</keyword>
<keyword id="KW-1133">Transmembrane helix</keyword>
<keyword id="KW-0813">Transport</keyword>
<reference key="1">
    <citation type="journal article" date="2001" name="Nature">
        <title>Complete genome sequence of a multiple drug resistant Salmonella enterica serovar Typhi CT18.</title>
        <authorList>
            <person name="Parkhill J."/>
            <person name="Dougan G."/>
            <person name="James K.D."/>
            <person name="Thomson N.R."/>
            <person name="Pickard D."/>
            <person name="Wain J."/>
            <person name="Churcher C.M."/>
            <person name="Mungall K.L."/>
            <person name="Bentley S.D."/>
            <person name="Holden M.T.G."/>
            <person name="Sebaihia M."/>
            <person name="Baker S."/>
            <person name="Basham D."/>
            <person name="Brooks K."/>
            <person name="Chillingworth T."/>
            <person name="Connerton P."/>
            <person name="Cronin A."/>
            <person name="Davis P."/>
            <person name="Davies R.M."/>
            <person name="Dowd L."/>
            <person name="White N."/>
            <person name="Farrar J."/>
            <person name="Feltwell T."/>
            <person name="Hamlin N."/>
            <person name="Haque A."/>
            <person name="Hien T.T."/>
            <person name="Holroyd S."/>
            <person name="Jagels K."/>
            <person name="Krogh A."/>
            <person name="Larsen T.S."/>
            <person name="Leather S."/>
            <person name="Moule S."/>
            <person name="O'Gaora P."/>
            <person name="Parry C."/>
            <person name="Quail M.A."/>
            <person name="Rutherford K.M."/>
            <person name="Simmonds M."/>
            <person name="Skelton J."/>
            <person name="Stevens K."/>
            <person name="Whitehead S."/>
            <person name="Barrell B.G."/>
        </authorList>
    </citation>
    <scope>NUCLEOTIDE SEQUENCE [LARGE SCALE GENOMIC DNA]</scope>
    <source>
        <strain>CT18</strain>
    </source>
</reference>
<reference key="2">
    <citation type="journal article" date="2003" name="J. Bacteriol.">
        <title>Comparative genomics of Salmonella enterica serovar Typhi strains Ty2 and CT18.</title>
        <authorList>
            <person name="Deng W."/>
            <person name="Liou S.-R."/>
            <person name="Plunkett G. III"/>
            <person name="Mayhew G.F."/>
            <person name="Rose D.J."/>
            <person name="Burland V."/>
            <person name="Kodoyianni V."/>
            <person name="Schwartz D.C."/>
            <person name="Blattner F.R."/>
        </authorList>
    </citation>
    <scope>NUCLEOTIDE SEQUENCE [LARGE SCALE GENOMIC DNA]</scope>
    <source>
        <strain>ATCC 700931 / Ty2</strain>
    </source>
</reference>
<accession>Q8Z5F7</accession>
<accession>Q7CAY6</accession>
<protein>
    <recommendedName>
        <fullName evidence="1">Multidrug resistance protein MdtB</fullName>
    </recommendedName>
    <alternativeName>
        <fullName evidence="1">Multidrug transporter MdtB</fullName>
    </alternativeName>
</protein>
<dbReference type="EMBL" id="AL513382">
    <property type="protein sequence ID" value="CAD02490.1"/>
    <property type="molecule type" value="Genomic_DNA"/>
</dbReference>
<dbReference type="EMBL" id="AE014613">
    <property type="protein sequence ID" value="AAO68438.1"/>
    <property type="molecule type" value="Genomic_DNA"/>
</dbReference>
<dbReference type="RefSeq" id="NP_456673.1">
    <property type="nucleotide sequence ID" value="NC_003198.1"/>
</dbReference>
<dbReference type="RefSeq" id="WP_001197813.1">
    <property type="nucleotide sequence ID" value="NZ_WSUR01000002.1"/>
</dbReference>
<dbReference type="SMR" id="Q8Z5F7"/>
<dbReference type="STRING" id="220341.gene:17586245"/>
<dbReference type="KEGG" id="stt:t0745"/>
<dbReference type="KEGG" id="sty:STY2340"/>
<dbReference type="PATRIC" id="fig|220341.7.peg.2364"/>
<dbReference type="eggNOG" id="COG0841">
    <property type="taxonomic scope" value="Bacteria"/>
</dbReference>
<dbReference type="HOGENOM" id="CLU_002755_1_1_6"/>
<dbReference type="OMA" id="VPMMCAK"/>
<dbReference type="OrthoDB" id="9757904at2"/>
<dbReference type="Proteomes" id="UP000000541">
    <property type="component" value="Chromosome"/>
</dbReference>
<dbReference type="Proteomes" id="UP000002670">
    <property type="component" value="Chromosome"/>
</dbReference>
<dbReference type="GO" id="GO:0005886">
    <property type="term" value="C:plasma membrane"/>
    <property type="evidence" value="ECO:0007669"/>
    <property type="project" value="UniProtKB-SubCell"/>
</dbReference>
<dbReference type="GO" id="GO:0042910">
    <property type="term" value="F:xenobiotic transmembrane transporter activity"/>
    <property type="evidence" value="ECO:0007669"/>
    <property type="project" value="TreeGrafter"/>
</dbReference>
<dbReference type="FunFam" id="1.20.1640.10:FF:000001">
    <property type="entry name" value="Efflux pump membrane transporter"/>
    <property type="match status" value="1"/>
</dbReference>
<dbReference type="FunFam" id="3.30.70.1430:FF:000001">
    <property type="entry name" value="Efflux pump membrane transporter"/>
    <property type="match status" value="1"/>
</dbReference>
<dbReference type="FunFam" id="3.30.2090.10:FF:000003">
    <property type="entry name" value="Multidrug resistance protein MdtB"/>
    <property type="match status" value="1"/>
</dbReference>
<dbReference type="Gene3D" id="3.30.70.1430">
    <property type="entry name" value="Multidrug efflux transporter AcrB pore domain"/>
    <property type="match status" value="2"/>
</dbReference>
<dbReference type="Gene3D" id="3.30.70.1440">
    <property type="entry name" value="Multidrug efflux transporter AcrB pore domain"/>
    <property type="match status" value="1"/>
</dbReference>
<dbReference type="Gene3D" id="3.30.70.1320">
    <property type="entry name" value="Multidrug efflux transporter AcrB pore domain like"/>
    <property type="match status" value="1"/>
</dbReference>
<dbReference type="Gene3D" id="3.30.2090.10">
    <property type="entry name" value="Multidrug efflux transporter AcrB TolC docking domain, DN and DC subdomains"/>
    <property type="match status" value="2"/>
</dbReference>
<dbReference type="Gene3D" id="1.20.1640.10">
    <property type="entry name" value="Multidrug efflux transporter AcrB transmembrane domain"/>
    <property type="match status" value="2"/>
</dbReference>
<dbReference type="HAMAP" id="MF_01423">
    <property type="entry name" value="MdtB"/>
    <property type="match status" value="1"/>
</dbReference>
<dbReference type="InterPro" id="IPR027463">
    <property type="entry name" value="AcrB_DN_DC_subdom"/>
</dbReference>
<dbReference type="InterPro" id="IPR001036">
    <property type="entry name" value="Acrflvin-R"/>
</dbReference>
<dbReference type="InterPro" id="IPR022831">
    <property type="entry name" value="Multidrug-R_MdtB"/>
</dbReference>
<dbReference type="NCBIfam" id="NF007798">
    <property type="entry name" value="PRK10503.1"/>
    <property type="match status" value="1"/>
</dbReference>
<dbReference type="NCBIfam" id="NF033617">
    <property type="entry name" value="RND_permease_2"/>
    <property type="match status" value="1"/>
</dbReference>
<dbReference type="PANTHER" id="PTHR32063">
    <property type="match status" value="1"/>
</dbReference>
<dbReference type="PANTHER" id="PTHR32063:SF21">
    <property type="entry name" value="MULTIDRUG RESISTANCE PROTEIN MDTB"/>
    <property type="match status" value="1"/>
</dbReference>
<dbReference type="Pfam" id="PF00873">
    <property type="entry name" value="ACR_tran"/>
    <property type="match status" value="1"/>
</dbReference>
<dbReference type="PRINTS" id="PR00702">
    <property type="entry name" value="ACRIFLAVINRP"/>
</dbReference>
<dbReference type="SUPFAM" id="SSF82693">
    <property type="entry name" value="Multidrug efflux transporter AcrB pore domain, PN1, PN2, PC1 and PC2 subdomains"/>
    <property type="match status" value="3"/>
</dbReference>
<dbReference type="SUPFAM" id="SSF82714">
    <property type="entry name" value="Multidrug efflux transporter AcrB TolC docking domain, DN and DC subdomains"/>
    <property type="match status" value="2"/>
</dbReference>
<dbReference type="SUPFAM" id="SSF82866">
    <property type="entry name" value="Multidrug efflux transporter AcrB transmembrane domain"/>
    <property type="match status" value="2"/>
</dbReference>
<name>MDTB_SALTI</name>